<protein>
    <recommendedName>
        <fullName evidence="1">ATP synthase gamma chain</fullName>
    </recommendedName>
    <alternativeName>
        <fullName evidence="1">ATP synthase F1 sector gamma subunit</fullName>
    </alternativeName>
    <alternativeName>
        <fullName evidence="1">F-ATPase gamma subunit</fullName>
    </alternativeName>
</protein>
<name>ATPG_JANMA</name>
<feature type="chain" id="PRO_1000053230" description="ATP synthase gamma chain">
    <location>
        <begin position="1"/>
        <end position="289"/>
    </location>
</feature>
<organism>
    <name type="scientific">Janthinobacterium sp. (strain Marseille)</name>
    <name type="common">Minibacterium massiliensis</name>
    <dbReference type="NCBI Taxonomy" id="375286"/>
    <lineage>
        <taxon>Bacteria</taxon>
        <taxon>Pseudomonadati</taxon>
        <taxon>Pseudomonadota</taxon>
        <taxon>Betaproteobacteria</taxon>
        <taxon>Burkholderiales</taxon>
        <taxon>Oxalobacteraceae</taxon>
        <taxon>Janthinobacterium</taxon>
    </lineage>
</organism>
<comment type="function">
    <text evidence="1">Produces ATP from ADP in the presence of a proton gradient across the membrane. The gamma chain is believed to be important in regulating ATPase activity and the flow of protons through the CF(0) complex.</text>
</comment>
<comment type="subunit">
    <text evidence="1">F-type ATPases have 2 components, CF(1) - the catalytic core - and CF(0) - the membrane proton channel. CF(1) has five subunits: alpha(3), beta(3), gamma(1), delta(1), epsilon(1). CF(0) has three main subunits: a, b and c.</text>
</comment>
<comment type="subcellular location">
    <subcellularLocation>
        <location evidence="1">Cell inner membrane</location>
        <topology evidence="1">Peripheral membrane protein</topology>
    </subcellularLocation>
</comment>
<comment type="similarity">
    <text evidence="1">Belongs to the ATPase gamma chain family.</text>
</comment>
<dbReference type="EMBL" id="CP000269">
    <property type="protein sequence ID" value="ABR88452.1"/>
    <property type="molecule type" value="Genomic_DNA"/>
</dbReference>
<dbReference type="RefSeq" id="WP_012081464.1">
    <property type="nucleotide sequence ID" value="NC_009659.1"/>
</dbReference>
<dbReference type="SMR" id="A6T471"/>
<dbReference type="STRING" id="375286.mma_3628"/>
<dbReference type="KEGG" id="mms:mma_3628"/>
<dbReference type="eggNOG" id="COG0224">
    <property type="taxonomic scope" value="Bacteria"/>
</dbReference>
<dbReference type="HOGENOM" id="CLU_050669_0_1_4"/>
<dbReference type="OrthoDB" id="9812769at2"/>
<dbReference type="Proteomes" id="UP000006388">
    <property type="component" value="Chromosome"/>
</dbReference>
<dbReference type="GO" id="GO:0005886">
    <property type="term" value="C:plasma membrane"/>
    <property type="evidence" value="ECO:0007669"/>
    <property type="project" value="UniProtKB-SubCell"/>
</dbReference>
<dbReference type="GO" id="GO:0045259">
    <property type="term" value="C:proton-transporting ATP synthase complex"/>
    <property type="evidence" value="ECO:0007669"/>
    <property type="project" value="UniProtKB-KW"/>
</dbReference>
<dbReference type="GO" id="GO:0005524">
    <property type="term" value="F:ATP binding"/>
    <property type="evidence" value="ECO:0007669"/>
    <property type="project" value="UniProtKB-UniRule"/>
</dbReference>
<dbReference type="GO" id="GO:0046933">
    <property type="term" value="F:proton-transporting ATP synthase activity, rotational mechanism"/>
    <property type="evidence" value="ECO:0007669"/>
    <property type="project" value="UniProtKB-UniRule"/>
</dbReference>
<dbReference type="GO" id="GO:0042777">
    <property type="term" value="P:proton motive force-driven plasma membrane ATP synthesis"/>
    <property type="evidence" value="ECO:0007669"/>
    <property type="project" value="UniProtKB-UniRule"/>
</dbReference>
<dbReference type="CDD" id="cd12151">
    <property type="entry name" value="F1-ATPase_gamma"/>
    <property type="match status" value="1"/>
</dbReference>
<dbReference type="FunFam" id="1.10.287.80:FF:000005">
    <property type="entry name" value="ATP synthase gamma chain"/>
    <property type="match status" value="1"/>
</dbReference>
<dbReference type="Gene3D" id="3.40.1380.10">
    <property type="match status" value="1"/>
</dbReference>
<dbReference type="Gene3D" id="1.10.287.80">
    <property type="entry name" value="ATP synthase, gamma subunit, helix hairpin domain"/>
    <property type="match status" value="1"/>
</dbReference>
<dbReference type="HAMAP" id="MF_00815">
    <property type="entry name" value="ATP_synth_gamma_bact"/>
    <property type="match status" value="1"/>
</dbReference>
<dbReference type="InterPro" id="IPR035968">
    <property type="entry name" value="ATP_synth_F1_ATPase_gsu"/>
</dbReference>
<dbReference type="InterPro" id="IPR000131">
    <property type="entry name" value="ATP_synth_F1_gsu"/>
</dbReference>
<dbReference type="InterPro" id="IPR023632">
    <property type="entry name" value="ATP_synth_F1_gsu_CS"/>
</dbReference>
<dbReference type="NCBIfam" id="TIGR01146">
    <property type="entry name" value="ATPsyn_F1gamma"/>
    <property type="match status" value="1"/>
</dbReference>
<dbReference type="NCBIfam" id="NF004144">
    <property type="entry name" value="PRK05621.1-1"/>
    <property type="match status" value="1"/>
</dbReference>
<dbReference type="PANTHER" id="PTHR11693">
    <property type="entry name" value="ATP SYNTHASE GAMMA CHAIN"/>
    <property type="match status" value="1"/>
</dbReference>
<dbReference type="PANTHER" id="PTHR11693:SF22">
    <property type="entry name" value="ATP SYNTHASE SUBUNIT GAMMA, MITOCHONDRIAL"/>
    <property type="match status" value="1"/>
</dbReference>
<dbReference type="Pfam" id="PF00231">
    <property type="entry name" value="ATP-synt"/>
    <property type="match status" value="1"/>
</dbReference>
<dbReference type="PRINTS" id="PR00126">
    <property type="entry name" value="ATPASEGAMMA"/>
</dbReference>
<dbReference type="SUPFAM" id="SSF52943">
    <property type="entry name" value="ATP synthase (F1-ATPase), gamma subunit"/>
    <property type="match status" value="1"/>
</dbReference>
<dbReference type="PROSITE" id="PS00153">
    <property type="entry name" value="ATPASE_GAMMA"/>
    <property type="match status" value="1"/>
</dbReference>
<evidence type="ECO:0000255" key="1">
    <source>
        <dbReference type="HAMAP-Rule" id="MF_00815"/>
    </source>
</evidence>
<gene>
    <name evidence="1" type="primary">atpG</name>
    <name type="ordered locus">mma_3628</name>
</gene>
<reference key="1">
    <citation type="journal article" date="2007" name="PLoS Genet.">
        <title>Genome analysis of Minibacterium massiliensis highlights the convergent evolution of water-living bacteria.</title>
        <authorList>
            <person name="Audic S."/>
            <person name="Robert C."/>
            <person name="Campagna B."/>
            <person name="Parinello H."/>
            <person name="Claverie J.-M."/>
            <person name="Raoult D."/>
            <person name="Drancourt M."/>
        </authorList>
    </citation>
    <scope>NUCLEOTIDE SEQUENCE [LARGE SCALE GENOMIC DNA]</scope>
    <source>
        <strain>Marseille</strain>
    </source>
</reference>
<sequence length="289" mass="31604">MASGKEIRGKIKSVENTKKITKAMEMVAASKMRKAQDRMHAARPYSDKIRNIAANLSQANPEYTHPFLVKSDASKTVGFIIVTTDKGLCGGMNTNSLRIVTTKLRELEAEGKKVEAVAIGNKGLGFLNRIGARVVSHAVQIGDTPHLDKLIGPVKVMLDAYQDGKLDAVYVVYTKFINTMKQEPMMEQLLPLAVDKLKADEDSLAWDYIYEPDAQTVIDELLVRYVEALIFQAVAENLASEQSARMVAMKSASDNAGSVISELKLVYNKTRQAAITKELSEIVAGAAAV</sequence>
<keyword id="KW-0066">ATP synthesis</keyword>
<keyword id="KW-0997">Cell inner membrane</keyword>
<keyword id="KW-1003">Cell membrane</keyword>
<keyword id="KW-0139">CF(1)</keyword>
<keyword id="KW-0375">Hydrogen ion transport</keyword>
<keyword id="KW-0406">Ion transport</keyword>
<keyword id="KW-0472">Membrane</keyword>
<keyword id="KW-0813">Transport</keyword>
<accession>A6T471</accession>
<proteinExistence type="inferred from homology"/>